<gene>
    <name evidence="1" type="primary">metN</name>
    <name type="ordered locus">SCO1559</name>
    <name type="ORF">SCL11.15c</name>
</gene>
<feature type="chain" id="PRO_0000270429" description="Methionine import ATP-binding protein MetN">
    <location>
        <begin position="1"/>
        <end position="351"/>
    </location>
</feature>
<feature type="domain" description="ABC transporter" evidence="1">
    <location>
        <begin position="2"/>
        <end position="247"/>
    </location>
</feature>
<feature type="binding site" evidence="1">
    <location>
        <begin position="38"/>
        <end position="45"/>
    </location>
    <ligand>
        <name>ATP</name>
        <dbReference type="ChEBI" id="CHEBI:30616"/>
    </ligand>
</feature>
<proteinExistence type="inferred from homology"/>
<sequence length="351" mass="37180">MITTSGLTKVYRSRGREVTALDGVDLHVREGEVYGVIGQSGAGKSSLIRCVNLLERPTAGTVTVAGADLTALAGRGPRAGRELRQARSRIGMVFQHFNLLSSRTVQDNVELPLEILGKSGKERSRKALELLDLVGLADKARAYPAQLSGGQKQRVGIARALAGDPKVLLSDEATSALDPETTRSILQLLRDLNRQLGLTVLLITHEMDVVKSICDSAALMDRGRVVESGTVGELLATPGSELAAALFPVGGDASGDDRTVLDVTFHGEAATQPVISQLSRTYNIDISILGAAIDTVGGLQIGRMRIELPGRYEDNVVPVGFLREQGLQIDVVNETPDAATASASLVKEGAK</sequence>
<protein>
    <recommendedName>
        <fullName evidence="1">Methionine import ATP-binding protein MetN</fullName>
        <ecNumber evidence="1">7.4.2.11</ecNumber>
    </recommendedName>
</protein>
<organism>
    <name type="scientific">Streptomyces coelicolor (strain ATCC BAA-471 / A3(2) / M145)</name>
    <dbReference type="NCBI Taxonomy" id="100226"/>
    <lineage>
        <taxon>Bacteria</taxon>
        <taxon>Bacillati</taxon>
        <taxon>Actinomycetota</taxon>
        <taxon>Actinomycetes</taxon>
        <taxon>Kitasatosporales</taxon>
        <taxon>Streptomycetaceae</taxon>
        <taxon>Streptomyces</taxon>
        <taxon>Streptomyces albidoflavus group</taxon>
    </lineage>
</organism>
<keyword id="KW-0029">Amino-acid transport</keyword>
<keyword id="KW-0067">ATP-binding</keyword>
<keyword id="KW-1003">Cell membrane</keyword>
<keyword id="KW-0472">Membrane</keyword>
<keyword id="KW-0547">Nucleotide-binding</keyword>
<keyword id="KW-1185">Reference proteome</keyword>
<keyword id="KW-1278">Translocase</keyword>
<keyword id="KW-0813">Transport</keyword>
<evidence type="ECO:0000255" key="1">
    <source>
        <dbReference type="HAMAP-Rule" id="MF_01719"/>
    </source>
</evidence>
<evidence type="ECO:0000305" key="2"/>
<dbReference type="EC" id="7.4.2.11" evidence="1"/>
<dbReference type="EMBL" id="AL939109">
    <property type="protein sequence ID" value="CAB76078.1"/>
    <property type="status" value="ALT_INIT"/>
    <property type="molecule type" value="Genomic_DNA"/>
</dbReference>
<dbReference type="RefSeq" id="NP_625837.1">
    <property type="nucleotide sequence ID" value="NC_003888.3"/>
</dbReference>
<dbReference type="RefSeq" id="WP_016325822.1">
    <property type="nucleotide sequence ID" value="NZ_VNID01000021.1"/>
</dbReference>
<dbReference type="SMR" id="Q9L1C3"/>
<dbReference type="STRING" id="100226.gene:17759152"/>
<dbReference type="PaxDb" id="100226-SCO1559"/>
<dbReference type="KEGG" id="sco:SCO1559"/>
<dbReference type="PATRIC" id="fig|100226.15.peg.1571"/>
<dbReference type="eggNOG" id="COG1135">
    <property type="taxonomic scope" value="Bacteria"/>
</dbReference>
<dbReference type="HOGENOM" id="CLU_000604_1_3_11"/>
<dbReference type="InParanoid" id="Q9L1C3"/>
<dbReference type="OrthoDB" id="9802264at2"/>
<dbReference type="PhylomeDB" id="Q9L1C3"/>
<dbReference type="Proteomes" id="UP000001973">
    <property type="component" value="Chromosome"/>
</dbReference>
<dbReference type="GO" id="GO:0005886">
    <property type="term" value="C:plasma membrane"/>
    <property type="evidence" value="ECO:0007669"/>
    <property type="project" value="UniProtKB-SubCell"/>
</dbReference>
<dbReference type="GO" id="GO:0033232">
    <property type="term" value="F:ABC-type D-methionine transporter activity"/>
    <property type="evidence" value="ECO:0007669"/>
    <property type="project" value="UniProtKB-EC"/>
</dbReference>
<dbReference type="GO" id="GO:0005524">
    <property type="term" value="F:ATP binding"/>
    <property type="evidence" value="ECO:0007669"/>
    <property type="project" value="UniProtKB-KW"/>
</dbReference>
<dbReference type="GO" id="GO:0016887">
    <property type="term" value="F:ATP hydrolysis activity"/>
    <property type="evidence" value="ECO:0007669"/>
    <property type="project" value="InterPro"/>
</dbReference>
<dbReference type="CDD" id="cd03258">
    <property type="entry name" value="ABC_MetN_methionine_transporter"/>
    <property type="match status" value="1"/>
</dbReference>
<dbReference type="FunFam" id="3.40.50.300:FF:000056">
    <property type="entry name" value="Cell division ATP-binding protein FtsE"/>
    <property type="match status" value="1"/>
</dbReference>
<dbReference type="Gene3D" id="3.30.70.260">
    <property type="match status" value="1"/>
</dbReference>
<dbReference type="Gene3D" id="3.40.50.300">
    <property type="entry name" value="P-loop containing nucleotide triphosphate hydrolases"/>
    <property type="match status" value="1"/>
</dbReference>
<dbReference type="InterPro" id="IPR003593">
    <property type="entry name" value="AAA+_ATPase"/>
</dbReference>
<dbReference type="InterPro" id="IPR003439">
    <property type="entry name" value="ABC_transporter-like_ATP-bd"/>
</dbReference>
<dbReference type="InterPro" id="IPR017871">
    <property type="entry name" value="ABC_transporter-like_CS"/>
</dbReference>
<dbReference type="InterPro" id="IPR045865">
    <property type="entry name" value="ACT-like_dom_sf"/>
</dbReference>
<dbReference type="InterPro" id="IPR041701">
    <property type="entry name" value="MetN_ABC"/>
</dbReference>
<dbReference type="InterPro" id="IPR050086">
    <property type="entry name" value="MetN_ABC_transporter-like"/>
</dbReference>
<dbReference type="InterPro" id="IPR018449">
    <property type="entry name" value="NIL_domain"/>
</dbReference>
<dbReference type="InterPro" id="IPR027417">
    <property type="entry name" value="P-loop_NTPase"/>
</dbReference>
<dbReference type="PANTHER" id="PTHR43166">
    <property type="entry name" value="AMINO ACID IMPORT ATP-BINDING PROTEIN"/>
    <property type="match status" value="1"/>
</dbReference>
<dbReference type="PANTHER" id="PTHR43166:SF30">
    <property type="entry name" value="METHIONINE IMPORT ATP-BINDING PROTEIN METN"/>
    <property type="match status" value="1"/>
</dbReference>
<dbReference type="Pfam" id="PF00005">
    <property type="entry name" value="ABC_tran"/>
    <property type="match status" value="1"/>
</dbReference>
<dbReference type="Pfam" id="PF09383">
    <property type="entry name" value="NIL"/>
    <property type="match status" value="1"/>
</dbReference>
<dbReference type="SMART" id="SM00382">
    <property type="entry name" value="AAA"/>
    <property type="match status" value="1"/>
</dbReference>
<dbReference type="SMART" id="SM00930">
    <property type="entry name" value="NIL"/>
    <property type="match status" value="1"/>
</dbReference>
<dbReference type="SUPFAM" id="SSF55021">
    <property type="entry name" value="ACT-like"/>
    <property type="match status" value="1"/>
</dbReference>
<dbReference type="SUPFAM" id="SSF52540">
    <property type="entry name" value="P-loop containing nucleoside triphosphate hydrolases"/>
    <property type="match status" value="1"/>
</dbReference>
<dbReference type="PROSITE" id="PS00211">
    <property type="entry name" value="ABC_TRANSPORTER_1"/>
    <property type="match status" value="1"/>
</dbReference>
<dbReference type="PROSITE" id="PS50893">
    <property type="entry name" value="ABC_TRANSPORTER_2"/>
    <property type="match status" value="1"/>
</dbReference>
<dbReference type="PROSITE" id="PS51264">
    <property type="entry name" value="METN"/>
    <property type="match status" value="1"/>
</dbReference>
<comment type="function">
    <text evidence="1">Part of the ABC transporter complex MetNIQ involved in methionine import. Responsible for energy coupling to the transport system.</text>
</comment>
<comment type="catalytic activity">
    <reaction evidence="1">
        <text>L-methionine(out) + ATP + H2O = L-methionine(in) + ADP + phosphate + H(+)</text>
        <dbReference type="Rhea" id="RHEA:29779"/>
        <dbReference type="ChEBI" id="CHEBI:15377"/>
        <dbReference type="ChEBI" id="CHEBI:15378"/>
        <dbReference type="ChEBI" id="CHEBI:30616"/>
        <dbReference type="ChEBI" id="CHEBI:43474"/>
        <dbReference type="ChEBI" id="CHEBI:57844"/>
        <dbReference type="ChEBI" id="CHEBI:456216"/>
        <dbReference type="EC" id="7.4.2.11"/>
    </reaction>
</comment>
<comment type="catalytic activity">
    <reaction evidence="1">
        <text>D-methionine(out) + ATP + H2O = D-methionine(in) + ADP + phosphate + H(+)</text>
        <dbReference type="Rhea" id="RHEA:29767"/>
        <dbReference type="ChEBI" id="CHEBI:15377"/>
        <dbReference type="ChEBI" id="CHEBI:15378"/>
        <dbReference type="ChEBI" id="CHEBI:30616"/>
        <dbReference type="ChEBI" id="CHEBI:43474"/>
        <dbReference type="ChEBI" id="CHEBI:57932"/>
        <dbReference type="ChEBI" id="CHEBI:456216"/>
        <dbReference type="EC" id="7.4.2.11"/>
    </reaction>
</comment>
<comment type="subunit">
    <text evidence="1">The complex is composed of two ATP-binding proteins (MetN), two transmembrane proteins (MetI) and a solute-binding protein (MetQ).</text>
</comment>
<comment type="subcellular location">
    <subcellularLocation>
        <location evidence="1">Cell membrane</location>
        <topology evidence="1">Peripheral membrane protein</topology>
    </subcellularLocation>
</comment>
<comment type="similarity">
    <text evidence="1">Belongs to the ABC transporter superfamily. Methionine importer (TC 3.A.1.24) family.</text>
</comment>
<comment type="sequence caution" evidence="2">
    <conflict type="erroneous initiation">
        <sequence resource="EMBL-CDS" id="CAB76078"/>
    </conflict>
</comment>
<name>METN_STRCO</name>
<reference key="1">
    <citation type="journal article" date="2002" name="Nature">
        <title>Complete genome sequence of the model actinomycete Streptomyces coelicolor A3(2).</title>
        <authorList>
            <person name="Bentley S.D."/>
            <person name="Chater K.F."/>
            <person name="Cerdeno-Tarraga A.-M."/>
            <person name="Challis G.L."/>
            <person name="Thomson N.R."/>
            <person name="James K.D."/>
            <person name="Harris D.E."/>
            <person name="Quail M.A."/>
            <person name="Kieser H."/>
            <person name="Harper D."/>
            <person name="Bateman A."/>
            <person name="Brown S."/>
            <person name="Chandra G."/>
            <person name="Chen C.W."/>
            <person name="Collins M."/>
            <person name="Cronin A."/>
            <person name="Fraser A."/>
            <person name="Goble A."/>
            <person name="Hidalgo J."/>
            <person name="Hornsby T."/>
            <person name="Howarth S."/>
            <person name="Huang C.-H."/>
            <person name="Kieser T."/>
            <person name="Larke L."/>
            <person name="Murphy L.D."/>
            <person name="Oliver K."/>
            <person name="O'Neil S."/>
            <person name="Rabbinowitsch E."/>
            <person name="Rajandream M.A."/>
            <person name="Rutherford K.M."/>
            <person name="Rutter S."/>
            <person name="Seeger K."/>
            <person name="Saunders D."/>
            <person name="Sharp S."/>
            <person name="Squares R."/>
            <person name="Squares S."/>
            <person name="Taylor K."/>
            <person name="Warren T."/>
            <person name="Wietzorrek A."/>
            <person name="Woodward J.R."/>
            <person name="Barrell B.G."/>
            <person name="Parkhill J."/>
            <person name="Hopwood D.A."/>
        </authorList>
    </citation>
    <scope>NUCLEOTIDE SEQUENCE [LARGE SCALE GENOMIC DNA]</scope>
    <source>
        <strain>ATCC BAA-471 / A3(2) / M145</strain>
    </source>
</reference>
<accession>Q9L1C3</accession>